<proteinExistence type="inferred from homology"/>
<protein>
    <recommendedName>
        <fullName evidence="1">Ferrochelatase 1</fullName>
        <ecNumber evidence="1">4.98.1.1</ecNumber>
    </recommendedName>
    <alternativeName>
        <fullName evidence="1">Heme synthase 1</fullName>
    </alternativeName>
    <alternativeName>
        <fullName evidence="1">Protoheme ferro-lyase 1</fullName>
    </alternativeName>
</protein>
<organism>
    <name type="scientific">Shewanella oneidensis (strain ATCC 700550 / JCM 31522 / CIP 106686 / LMG 19005 / NCIMB 14063 / MR-1)</name>
    <dbReference type="NCBI Taxonomy" id="211586"/>
    <lineage>
        <taxon>Bacteria</taxon>
        <taxon>Pseudomonadati</taxon>
        <taxon>Pseudomonadota</taxon>
        <taxon>Gammaproteobacteria</taxon>
        <taxon>Alteromonadales</taxon>
        <taxon>Shewanellaceae</taxon>
        <taxon>Shewanella</taxon>
    </lineage>
</organism>
<sequence>MTSPSPAFGVLLVNLGTPDEPTPKAVKRFLKQFLSDPRVVDLSPWLWQPILQGIILNTRPKKVAKLYQSVWTEQGSPLMVISQCQAQKLATDLSATFNQTIPVELGMSYGNPSIESGFAKLKAQGAERIVVLPLYPQYSCSTVASVFDAVAHYLTRVRDIPELRFNKQYFAHEAYIAALAHSVKRHWKTHGQAEKLILSFHGIPLRYATEGDPYPEQCRTTAKLLAQALGLTDGQWQVCFQSRFGKEEWLTPYADELLADLPRQGVKSVDVICPAFATDCLETLEEISIGAKETFLHAGGEAYHFIPCLNDDELHIELLRLLVQEQTQSWISAE</sequence>
<dbReference type="EC" id="4.98.1.1" evidence="1"/>
<dbReference type="EMBL" id="AE014299">
    <property type="protein sequence ID" value="AAN55069.2"/>
    <property type="molecule type" value="Genomic_DNA"/>
</dbReference>
<dbReference type="RefSeq" id="NP_717625.2">
    <property type="nucleotide sequence ID" value="NC_004347.2"/>
</dbReference>
<dbReference type="SMR" id="Q8EFF4"/>
<dbReference type="STRING" id="211586.SO_2019"/>
<dbReference type="PaxDb" id="211586-SO_2019"/>
<dbReference type="KEGG" id="son:SO_2019"/>
<dbReference type="PATRIC" id="fig|211586.12.peg.1938"/>
<dbReference type="eggNOG" id="COG0276">
    <property type="taxonomic scope" value="Bacteria"/>
</dbReference>
<dbReference type="HOGENOM" id="CLU_018884_0_0_6"/>
<dbReference type="OrthoDB" id="9809741at2"/>
<dbReference type="PhylomeDB" id="Q8EFF4"/>
<dbReference type="BioCyc" id="SONE211586:G1GMP-1861-MONOMER"/>
<dbReference type="UniPathway" id="UPA00252">
    <property type="reaction ID" value="UER00325"/>
</dbReference>
<dbReference type="Proteomes" id="UP000008186">
    <property type="component" value="Chromosome"/>
</dbReference>
<dbReference type="GO" id="GO:0005737">
    <property type="term" value="C:cytoplasm"/>
    <property type="evidence" value="ECO:0007669"/>
    <property type="project" value="UniProtKB-SubCell"/>
</dbReference>
<dbReference type="GO" id="GO:0004325">
    <property type="term" value="F:ferrochelatase activity"/>
    <property type="evidence" value="ECO:0000318"/>
    <property type="project" value="GO_Central"/>
</dbReference>
<dbReference type="GO" id="GO:0046872">
    <property type="term" value="F:metal ion binding"/>
    <property type="evidence" value="ECO:0007669"/>
    <property type="project" value="UniProtKB-KW"/>
</dbReference>
<dbReference type="GO" id="GO:0006783">
    <property type="term" value="P:heme biosynthetic process"/>
    <property type="evidence" value="ECO:0000318"/>
    <property type="project" value="GO_Central"/>
</dbReference>
<dbReference type="CDD" id="cd00419">
    <property type="entry name" value="Ferrochelatase_C"/>
    <property type="match status" value="1"/>
</dbReference>
<dbReference type="CDD" id="cd03411">
    <property type="entry name" value="Ferrochelatase_N"/>
    <property type="match status" value="1"/>
</dbReference>
<dbReference type="FunFam" id="3.40.50.1400:FF:000002">
    <property type="entry name" value="Ferrochelatase"/>
    <property type="match status" value="1"/>
</dbReference>
<dbReference type="Gene3D" id="3.40.50.1400">
    <property type="match status" value="2"/>
</dbReference>
<dbReference type="HAMAP" id="MF_00323">
    <property type="entry name" value="Ferrochelatase"/>
    <property type="match status" value="1"/>
</dbReference>
<dbReference type="InterPro" id="IPR001015">
    <property type="entry name" value="Ferrochelatase"/>
</dbReference>
<dbReference type="InterPro" id="IPR019772">
    <property type="entry name" value="Ferrochelatase_AS"/>
</dbReference>
<dbReference type="InterPro" id="IPR033644">
    <property type="entry name" value="Ferrochelatase_C"/>
</dbReference>
<dbReference type="InterPro" id="IPR033659">
    <property type="entry name" value="Ferrochelatase_N"/>
</dbReference>
<dbReference type="NCBIfam" id="TIGR00109">
    <property type="entry name" value="hemH"/>
    <property type="match status" value="1"/>
</dbReference>
<dbReference type="PANTHER" id="PTHR11108">
    <property type="entry name" value="FERROCHELATASE"/>
    <property type="match status" value="1"/>
</dbReference>
<dbReference type="PANTHER" id="PTHR11108:SF1">
    <property type="entry name" value="FERROCHELATASE, MITOCHONDRIAL"/>
    <property type="match status" value="1"/>
</dbReference>
<dbReference type="Pfam" id="PF00762">
    <property type="entry name" value="Ferrochelatase"/>
    <property type="match status" value="1"/>
</dbReference>
<dbReference type="SUPFAM" id="SSF53800">
    <property type="entry name" value="Chelatase"/>
    <property type="match status" value="1"/>
</dbReference>
<dbReference type="PROSITE" id="PS00534">
    <property type="entry name" value="FERROCHELATASE"/>
    <property type="match status" value="1"/>
</dbReference>
<comment type="function">
    <text evidence="1">Catalyzes the ferrous insertion into protoporphyrin IX.</text>
</comment>
<comment type="catalytic activity">
    <reaction evidence="1">
        <text>heme b + 2 H(+) = protoporphyrin IX + Fe(2+)</text>
        <dbReference type="Rhea" id="RHEA:22584"/>
        <dbReference type="ChEBI" id="CHEBI:15378"/>
        <dbReference type="ChEBI" id="CHEBI:29033"/>
        <dbReference type="ChEBI" id="CHEBI:57306"/>
        <dbReference type="ChEBI" id="CHEBI:60344"/>
        <dbReference type="EC" id="4.98.1.1"/>
    </reaction>
</comment>
<comment type="pathway">
    <text evidence="1">Porphyrin-containing compound metabolism; protoheme biosynthesis; protoheme from protoporphyrin-IX: step 1/1.</text>
</comment>
<comment type="subcellular location">
    <subcellularLocation>
        <location evidence="1">Cytoplasm</location>
    </subcellularLocation>
</comment>
<comment type="similarity">
    <text evidence="1 2">Belongs to the ferrochelatase family.</text>
</comment>
<gene>
    <name evidence="1" type="primary">hemH1</name>
    <name type="synonym">hemH-1</name>
    <name type="ordered locus">SO_2019</name>
</gene>
<name>HEMH1_SHEON</name>
<accession>Q8EFF4</accession>
<keyword id="KW-0963">Cytoplasm</keyword>
<keyword id="KW-0350">Heme biosynthesis</keyword>
<keyword id="KW-0408">Iron</keyword>
<keyword id="KW-0456">Lyase</keyword>
<keyword id="KW-0479">Metal-binding</keyword>
<keyword id="KW-0627">Porphyrin biosynthesis</keyword>
<keyword id="KW-1185">Reference proteome</keyword>
<reference key="1">
    <citation type="journal article" date="2002" name="Nat. Biotechnol.">
        <title>Genome sequence of the dissimilatory metal ion-reducing bacterium Shewanella oneidensis.</title>
        <authorList>
            <person name="Heidelberg J.F."/>
            <person name="Paulsen I.T."/>
            <person name="Nelson K.E."/>
            <person name="Gaidos E.J."/>
            <person name="Nelson W.C."/>
            <person name="Read T.D."/>
            <person name="Eisen J.A."/>
            <person name="Seshadri R."/>
            <person name="Ward N.L."/>
            <person name="Methe B.A."/>
            <person name="Clayton R.A."/>
            <person name="Meyer T."/>
            <person name="Tsapin A."/>
            <person name="Scott J."/>
            <person name="Beanan M.J."/>
            <person name="Brinkac L.M."/>
            <person name="Daugherty S.C."/>
            <person name="DeBoy R.T."/>
            <person name="Dodson R.J."/>
            <person name="Durkin A.S."/>
            <person name="Haft D.H."/>
            <person name="Kolonay J.F."/>
            <person name="Madupu R."/>
            <person name="Peterson J.D."/>
            <person name="Umayam L.A."/>
            <person name="White O."/>
            <person name="Wolf A.M."/>
            <person name="Vamathevan J.J."/>
            <person name="Weidman J.F."/>
            <person name="Impraim M."/>
            <person name="Lee K."/>
            <person name="Berry K.J."/>
            <person name="Lee C."/>
            <person name="Mueller J."/>
            <person name="Khouri H.M."/>
            <person name="Gill J."/>
            <person name="Utterback T.R."/>
            <person name="McDonald L.A."/>
            <person name="Feldblyum T.V."/>
            <person name="Smith H.O."/>
            <person name="Venter J.C."/>
            <person name="Nealson K.H."/>
            <person name="Fraser C.M."/>
        </authorList>
    </citation>
    <scope>NUCLEOTIDE SEQUENCE [LARGE SCALE GENOMIC DNA]</scope>
    <source>
        <strain>ATCC 700550 / JCM 31522 / CIP 106686 / LMG 19005 / NCIMB 14063 / MR-1</strain>
    </source>
</reference>
<evidence type="ECO:0000255" key="1">
    <source>
        <dbReference type="HAMAP-Rule" id="MF_00323"/>
    </source>
</evidence>
<evidence type="ECO:0000305" key="2"/>
<feature type="chain" id="PRO_0000175198" description="Ferrochelatase 1">
    <location>
        <begin position="1"/>
        <end position="334"/>
    </location>
</feature>
<feature type="binding site" evidence="1">
    <location>
        <position position="201"/>
    </location>
    <ligand>
        <name>Fe cation</name>
        <dbReference type="ChEBI" id="CHEBI:24875"/>
    </ligand>
</feature>
<feature type="binding site" evidence="1">
    <location>
        <position position="282"/>
    </location>
    <ligand>
        <name>Fe cation</name>
        <dbReference type="ChEBI" id="CHEBI:24875"/>
    </ligand>
</feature>